<feature type="signal peptide" evidence="2">
    <location>
        <begin position="1"/>
        <end position="23"/>
    </location>
</feature>
<feature type="peptide" id="PRO_0000029929" description="Diapause hormone homolog" evidence="2">
    <location>
        <begin position="24"/>
        <end position="47"/>
    </location>
</feature>
<feature type="propeptide" id="PRO_0000029930">
    <location>
        <begin position="51"/>
        <end position="94"/>
    </location>
</feature>
<feature type="peptide" id="PRO_0000029931" description="Alpha-SG neuropeptide" evidence="2">
    <location>
        <begin position="97"/>
        <end position="103"/>
    </location>
</feature>
<feature type="peptide" id="PRO_0000029932" description="Beta-SG neuropeptide" evidence="2">
    <location>
        <begin position="106"/>
        <end position="123"/>
    </location>
</feature>
<feature type="peptide" id="PRO_0000029933" description="Pheromone biosynthesis-activating neuropeptide">
    <location>
        <begin position="127"/>
        <end position="159"/>
    </location>
</feature>
<feature type="peptide" id="PRO_0000029934" description="Gamma-SG neuropeptide" evidence="2">
    <location>
        <begin position="162"/>
        <end position="169"/>
    </location>
</feature>
<feature type="propeptide" id="PRO_0000029935">
    <location>
        <begin position="172"/>
        <end position="194"/>
    </location>
</feature>
<feature type="modified residue" description="Leucine amide" evidence="1">
    <location>
        <position position="47"/>
    </location>
</feature>
<feature type="modified residue" description="Leucine amide" evidence="1">
    <location>
        <position position="103"/>
    </location>
</feature>
<feature type="modified residue" description="Leucine amide" evidence="1">
    <location>
        <position position="123"/>
    </location>
</feature>
<feature type="modified residue" description="Leucine amide" evidence="1">
    <location>
        <position position="159"/>
    </location>
</feature>
<feature type="modified residue" description="Leucine amide" evidence="1">
    <location>
        <position position="169"/>
    </location>
</feature>
<protein>
    <recommendedName>
        <fullName>PBAN-type neuropeptides</fullName>
    </recommendedName>
    <alternativeName>
        <fullName>Pheromone/pyrokinin biosynthesis-activating neuropeptide</fullName>
    </alternativeName>
    <component>
        <recommendedName>
            <fullName>Diapause hormone homolog</fullName>
            <shortName>DH</shortName>
        </recommendedName>
        <alternativeName>
            <fullName>Pyrokinin-1</fullName>
        </alternativeName>
    </component>
    <component>
        <recommendedName>
            <fullName>Alpha-SG neuropeptide</fullName>
        </recommendedName>
    </component>
    <component>
        <recommendedName>
            <fullName>Beta-SG neuropeptide</fullName>
        </recommendedName>
        <alternativeName>
            <fullName>Pyrokinin-2</fullName>
        </alternativeName>
    </component>
    <component>
        <recommendedName>
            <fullName>Pheromone biosynthesis-activating neuropeptide</fullName>
            <shortName>Has-PBAN</shortName>
            <shortName>HeA-PBAN</shortName>
        </recommendedName>
        <alternativeName>
            <fullName>Pyrokinin-3</fullName>
        </alternativeName>
    </component>
    <component>
        <recommendedName>
            <fullName>Gamma-SG neuropeptide</fullName>
        </recommendedName>
        <alternativeName>
            <fullName>Pyrokinin-4</fullName>
        </alternativeName>
    </component>
</protein>
<evidence type="ECO:0000250" key="1"/>
<evidence type="ECO:0000255" key="2"/>
<evidence type="ECO:0000269" key="3">
    <source>
    </source>
</evidence>
<evidence type="ECO:0000305" key="4"/>
<proteinExistence type="evidence at transcript level"/>
<organism>
    <name type="scientific">Helicoverpa assulta</name>
    <name type="common">Oriental tobacco budworm</name>
    <name type="synonym">Heliothis assulta</name>
    <dbReference type="NCBI Taxonomy" id="52344"/>
    <lineage>
        <taxon>Eukaryota</taxon>
        <taxon>Metazoa</taxon>
        <taxon>Ecdysozoa</taxon>
        <taxon>Arthropoda</taxon>
        <taxon>Hexapoda</taxon>
        <taxon>Insecta</taxon>
        <taxon>Pterygota</taxon>
        <taxon>Neoptera</taxon>
        <taxon>Endopterygota</taxon>
        <taxon>Lepidoptera</taxon>
        <taxon>Glossata</taxon>
        <taxon>Ditrysia</taxon>
        <taxon>Noctuoidea</taxon>
        <taxon>Noctuidae</taxon>
        <taxon>Heliothinae</taxon>
        <taxon>Helicoverpa</taxon>
    </lineage>
</organism>
<comment type="function">
    <text evidence="3">A hormone that controls sex pheromone production in females and pheromone responsiveness in male. Also mediates visceral muscle contractile activity (myotropic activity).</text>
</comment>
<comment type="subcellular location">
    <subcellularLocation>
        <location evidence="3">Secreted</location>
    </subcellularLocation>
</comment>
<comment type="tissue specificity">
    <text evidence="3">Synthesized in the subesophageal ganglion and released in the hemolymph.</text>
</comment>
<comment type="developmental stage">
    <text evidence="3">Detected in 1-3 day old adults.</text>
</comment>
<comment type="miscellaneous">
    <text evidence="1">Juvenile hormone seems to allow PBAN release, which then induces pheromone biosynthesis.</text>
</comment>
<comment type="miscellaneous">
    <text>PBAN is produced independent of the photoperiod. The circadian rhythm in pheromone production is due to the circadian rhythm of PBAN release.</text>
</comment>
<comment type="similarity">
    <text evidence="4">Belongs to the pyrokinin family.</text>
</comment>
<keyword id="KW-0027">Amidation</keyword>
<keyword id="KW-0165">Cleavage on pair of basic residues</keyword>
<keyword id="KW-0372">Hormone</keyword>
<keyword id="KW-0527">Neuropeptide</keyword>
<keyword id="KW-0589">Pheromone response</keyword>
<keyword id="KW-0964">Secreted</keyword>
<keyword id="KW-0732">Signal</keyword>
<dbReference type="EMBL" id="U96761">
    <property type="protein sequence ID" value="AAC64293.1"/>
    <property type="molecule type" value="mRNA"/>
</dbReference>
<dbReference type="EMBL" id="AY052417">
    <property type="protein sequence ID" value="AAL13079.2"/>
    <property type="molecule type" value="mRNA"/>
</dbReference>
<dbReference type="GO" id="GO:0005576">
    <property type="term" value="C:extracellular region"/>
    <property type="evidence" value="ECO:0007669"/>
    <property type="project" value="UniProtKB-SubCell"/>
</dbReference>
<dbReference type="GO" id="GO:0005184">
    <property type="term" value="F:neuropeptide hormone activity"/>
    <property type="evidence" value="ECO:0007669"/>
    <property type="project" value="InterPro"/>
</dbReference>
<dbReference type="GO" id="GO:0007218">
    <property type="term" value="P:neuropeptide signaling pathway"/>
    <property type="evidence" value="ECO:0007669"/>
    <property type="project" value="UniProtKB-KW"/>
</dbReference>
<dbReference type="GO" id="GO:0042811">
    <property type="term" value="P:pheromone biosynthetic process"/>
    <property type="evidence" value="ECO:0007669"/>
    <property type="project" value="InterPro"/>
</dbReference>
<dbReference type="GO" id="GO:0019236">
    <property type="term" value="P:response to pheromone"/>
    <property type="evidence" value="ECO:0007669"/>
    <property type="project" value="UniProtKB-KW"/>
</dbReference>
<dbReference type="InterPro" id="IPR008730">
    <property type="entry name" value="PBAN"/>
</dbReference>
<dbReference type="InterPro" id="IPR001484">
    <property type="entry name" value="Pyrokinin_CS"/>
</dbReference>
<dbReference type="Pfam" id="PF05874">
    <property type="entry name" value="PBAN"/>
    <property type="match status" value="1"/>
</dbReference>
<dbReference type="PROSITE" id="PS00539">
    <property type="entry name" value="PYROKININ"/>
    <property type="match status" value="4"/>
</dbReference>
<gene>
    <name type="primary">PBAN</name>
</gene>
<reference key="1">
    <citation type="journal article" date="1998" name="Insect Biochem. Mol. Biol.">
        <title>Isolation and identification of the cDNA encoding the pheromone biosynthesis activating neuropeptide and additional neuropeptides in the oriental tobacco budworm, Helicoverpa assulta (Lepidoptera: Noctuidae).</title>
        <authorList>
            <person name="Choi M.Y."/>
            <person name="Tanaka M."/>
            <person name="Kataoka H."/>
            <person name="Boo K.S."/>
            <person name="Tatsuki S."/>
        </authorList>
    </citation>
    <scope>NUCLEOTIDE SEQUENCE [MRNA]</scope>
    <scope>FUNCTION</scope>
    <scope>SUBCELLULAR LOCATION</scope>
    <scope>TISSUE SPECIFICITY</scope>
    <scope>DEVELOPMENTAL STAGE</scope>
    <scope>PEPTIDE SYNTHESIS</scope>
    <source>
        <tissue>Brain</tissue>
        <tissue>Subesophageal ganglion</tissue>
    </source>
</reference>
<reference key="2">
    <citation type="submission" date="2001-08" db="EMBL/GenBank/DDBJ databases">
        <title>cDNA cloning and sequence determination of the diapause hormone neuropeptide of the oriental to tobacco budworm, Helicoverpa assulta.</title>
        <authorList>
            <person name="Tang Q."/>
            <person name="Yang X."/>
            <person name="An S."/>
            <person name="Jiu M."/>
            <person name="Guo X."/>
            <person name="Ma J."/>
        </authorList>
    </citation>
    <scope>NUCLEOTIDE SEQUENCE [MRNA]</scope>
    <source>
        <tissue>Subesophageal ganglion</tissue>
    </source>
</reference>
<sequence length="194" mass="22343">MFNQTQFFVLLAVFTTSSVLGNNNDVKDGAASGAHSDRLGLWFGPRLGKRSLRISTEDNRQAFFKLLEAADALKYYYDQLPYEMQADEPETRVTKKVIFTPKLGRSLAYDDKSFENVEFTPRLGRRLSDDMPATPADQEMYRQDPEQIDSRTKYFSPRLGRTMNFSPRLGRELSYDMMPNKIRVVRSANKTRST</sequence>
<name>PBAN_HELAU</name>
<accession>O18641</accession>
<accession>Q95P22</accession>